<reference key="1">
    <citation type="journal article" date="2008" name="Genome Res.">
        <title>Insights from the complete genome sequence of Mycobacterium marinum on the evolution of Mycobacterium tuberculosis.</title>
        <authorList>
            <person name="Stinear T.P."/>
            <person name="Seemann T."/>
            <person name="Harrison P.F."/>
            <person name="Jenkin G.A."/>
            <person name="Davies J.K."/>
            <person name="Johnson P.D."/>
            <person name="Abdellah Z."/>
            <person name="Arrowsmith C."/>
            <person name="Chillingworth T."/>
            <person name="Churcher C."/>
            <person name="Clarke K."/>
            <person name="Cronin A."/>
            <person name="Davis P."/>
            <person name="Goodhead I."/>
            <person name="Holroyd N."/>
            <person name="Jagels K."/>
            <person name="Lord A."/>
            <person name="Moule S."/>
            <person name="Mungall K."/>
            <person name="Norbertczak H."/>
            <person name="Quail M.A."/>
            <person name="Rabbinowitsch E."/>
            <person name="Walker D."/>
            <person name="White B."/>
            <person name="Whitehead S."/>
            <person name="Small P.L."/>
            <person name="Brosch R."/>
            <person name="Ramakrishnan L."/>
            <person name="Fischbach M.A."/>
            <person name="Parkhill J."/>
            <person name="Cole S.T."/>
        </authorList>
    </citation>
    <scope>NUCLEOTIDE SEQUENCE [LARGE SCALE GENOMIC DNA]</scope>
    <source>
        <strain>ATCC BAA-535 / M</strain>
    </source>
</reference>
<gene>
    <name evidence="1" type="primary">thiG</name>
    <name type="ordered locus">MMAR_0720</name>
</gene>
<accession>B2HQ02</accession>
<organism>
    <name type="scientific">Mycobacterium marinum (strain ATCC BAA-535 / M)</name>
    <dbReference type="NCBI Taxonomy" id="216594"/>
    <lineage>
        <taxon>Bacteria</taxon>
        <taxon>Bacillati</taxon>
        <taxon>Actinomycetota</taxon>
        <taxon>Actinomycetes</taxon>
        <taxon>Mycobacteriales</taxon>
        <taxon>Mycobacteriaceae</taxon>
        <taxon>Mycobacterium</taxon>
        <taxon>Mycobacterium ulcerans group</taxon>
    </lineage>
</organism>
<evidence type="ECO:0000255" key="1">
    <source>
        <dbReference type="HAMAP-Rule" id="MF_00443"/>
    </source>
</evidence>
<dbReference type="EC" id="2.8.1.10" evidence="1"/>
<dbReference type="EMBL" id="CP000854">
    <property type="protein sequence ID" value="ACC39179.1"/>
    <property type="molecule type" value="Genomic_DNA"/>
</dbReference>
<dbReference type="RefSeq" id="WP_012392668.1">
    <property type="nucleotide sequence ID" value="NC_010612.1"/>
</dbReference>
<dbReference type="SMR" id="B2HQ02"/>
<dbReference type="STRING" id="216594.MMAR_0720"/>
<dbReference type="GeneID" id="93438917"/>
<dbReference type="KEGG" id="mmi:MMAR_0720"/>
<dbReference type="eggNOG" id="COG2022">
    <property type="taxonomic scope" value="Bacteria"/>
</dbReference>
<dbReference type="HOGENOM" id="CLU_062233_1_0_11"/>
<dbReference type="OrthoDB" id="9805935at2"/>
<dbReference type="UniPathway" id="UPA00060"/>
<dbReference type="Proteomes" id="UP000001190">
    <property type="component" value="Chromosome"/>
</dbReference>
<dbReference type="GO" id="GO:0005737">
    <property type="term" value="C:cytoplasm"/>
    <property type="evidence" value="ECO:0007669"/>
    <property type="project" value="UniProtKB-SubCell"/>
</dbReference>
<dbReference type="GO" id="GO:1990107">
    <property type="term" value="F:thiazole synthase activity"/>
    <property type="evidence" value="ECO:0007669"/>
    <property type="project" value="UniProtKB-EC"/>
</dbReference>
<dbReference type="GO" id="GO:0009229">
    <property type="term" value="P:thiamine diphosphate biosynthetic process"/>
    <property type="evidence" value="ECO:0007669"/>
    <property type="project" value="UniProtKB-UniRule"/>
</dbReference>
<dbReference type="CDD" id="cd04728">
    <property type="entry name" value="ThiG"/>
    <property type="match status" value="1"/>
</dbReference>
<dbReference type="Gene3D" id="3.20.20.70">
    <property type="entry name" value="Aldolase class I"/>
    <property type="match status" value="1"/>
</dbReference>
<dbReference type="HAMAP" id="MF_00443">
    <property type="entry name" value="ThiG"/>
    <property type="match status" value="1"/>
</dbReference>
<dbReference type="InterPro" id="IPR013785">
    <property type="entry name" value="Aldolase_TIM"/>
</dbReference>
<dbReference type="InterPro" id="IPR033983">
    <property type="entry name" value="Thiazole_synthase_ThiG"/>
</dbReference>
<dbReference type="InterPro" id="IPR008867">
    <property type="entry name" value="ThiG"/>
</dbReference>
<dbReference type="PANTHER" id="PTHR34266">
    <property type="entry name" value="THIAZOLE SYNTHASE"/>
    <property type="match status" value="1"/>
</dbReference>
<dbReference type="PANTHER" id="PTHR34266:SF2">
    <property type="entry name" value="THIAZOLE SYNTHASE"/>
    <property type="match status" value="1"/>
</dbReference>
<dbReference type="Pfam" id="PF05690">
    <property type="entry name" value="ThiG"/>
    <property type="match status" value="1"/>
</dbReference>
<dbReference type="SUPFAM" id="SSF110399">
    <property type="entry name" value="ThiG-like"/>
    <property type="match status" value="1"/>
</dbReference>
<comment type="function">
    <text evidence="1">Catalyzes the rearrangement of 1-deoxy-D-xylulose 5-phosphate (DXP) to produce the thiazole phosphate moiety of thiamine. Sulfur is provided by the thiocarboxylate moiety of the carrier protein ThiS. In vitro, sulfur can be provided by H(2)S.</text>
</comment>
<comment type="catalytic activity">
    <reaction evidence="1">
        <text>[ThiS sulfur-carrier protein]-C-terminal-Gly-aminoethanethioate + 2-iminoacetate + 1-deoxy-D-xylulose 5-phosphate = [ThiS sulfur-carrier protein]-C-terminal Gly-Gly + 2-[(2R,5Z)-2-carboxy-4-methylthiazol-5(2H)-ylidene]ethyl phosphate + 2 H2O + H(+)</text>
        <dbReference type="Rhea" id="RHEA:26297"/>
        <dbReference type="Rhea" id="RHEA-COMP:12909"/>
        <dbReference type="Rhea" id="RHEA-COMP:19908"/>
        <dbReference type="ChEBI" id="CHEBI:15377"/>
        <dbReference type="ChEBI" id="CHEBI:15378"/>
        <dbReference type="ChEBI" id="CHEBI:57792"/>
        <dbReference type="ChEBI" id="CHEBI:62899"/>
        <dbReference type="ChEBI" id="CHEBI:77846"/>
        <dbReference type="ChEBI" id="CHEBI:90778"/>
        <dbReference type="ChEBI" id="CHEBI:232372"/>
        <dbReference type="EC" id="2.8.1.10"/>
    </reaction>
</comment>
<comment type="pathway">
    <text evidence="1">Cofactor biosynthesis; thiamine diphosphate biosynthesis.</text>
</comment>
<comment type="subunit">
    <text evidence="1">Homotetramer. Forms heterodimers with either ThiH or ThiS.</text>
</comment>
<comment type="subcellular location">
    <subcellularLocation>
        <location evidence="1">Cytoplasm</location>
    </subcellularLocation>
</comment>
<comment type="similarity">
    <text evidence="1">Belongs to the ThiG family.</text>
</comment>
<name>THIG_MYCMM</name>
<feature type="chain" id="PRO_1000196877" description="Thiazole synthase">
    <location>
        <begin position="1"/>
        <end position="264"/>
    </location>
</feature>
<feature type="active site" description="Schiff-base intermediate with DXP" evidence="1">
    <location>
        <position position="98"/>
    </location>
</feature>
<feature type="binding site" evidence="1">
    <location>
        <position position="159"/>
    </location>
    <ligand>
        <name>1-deoxy-D-xylulose 5-phosphate</name>
        <dbReference type="ChEBI" id="CHEBI:57792"/>
    </ligand>
</feature>
<feature type="binding site" evidence="1">
    <location>
        <begin position="185"/>
        <end position="186"/>
    </location>
    <ligand>
        <name>1-deoxy-D-xylulose 5-phosphate</name>
        <dbReference type="ChEBI" id="CHEBI:57792"/>
    </ligand>
</feature>
<feature type="binding site" evidence="1">
    <location>
        <begin position="207"/>
        <end position="208"/>
    </location>
    <ligand>
        <name>1-deoxy-D-xylulose 5-phosphate</name>
        <dbReference type="ChEBI" id="CHEBI:57792"/>
    </ligand>
</feature>
<keyword id="KW-0963">Cytoplasm</keyword>
<keyword id="KW-1185">Reference proteome</keyword>
<keyword id="KW-0704">Schiff base</keyword>
<keyword id="KW-0784">Thiamine biosynthesis</keyword>
<keyword id="KW-0808">Transferase</keyword>
<protein>
    <recommendedName>
        <fullName evidence="1">Thiazole synthase</fullName>
        <ecNumber evidence="1">2.8.1.10</ecNumber>
    </recommendedName>
</protein>
<proteinExistence type="inferred from homology"/>
<sequence length="264" mass="26969">MVESKLTIADRSFASRLIMGTGGASNLAVLQEALVASGTELTTVAIRRVDAEGGTGLLDLLNRLGITPLPNTAGCRSAAEAVLTAQLAREALATNWVKLEVIADERTLLPDAIELVRAAEQLVDDGFVVLPYTNDDPVLARRLEDTGCAAVMPLGSPIGTGLGITNPHNIEMIVASAGVPVVLDAGIGTASDAALAMELGCDAVLLATAVTRAADPAAMAAAMSAAVTAGYLARRAGRIPKRFWAQASSPTLVTTQSPGAESGN</sequence>